<name>YDIN_BACSU</name>
<protein>
    <recommendedName>
        <fullName>Uncharacterized protein YdiN</fullName>
    </recommendedName>
</protein>
<reference key="1">
    <citation type="journal article" date="1997" name="DNA Res.">
        <title>Sequence analysis of the groESL-cotA region of the Bacillus subtilis genome, containing the restriction/modification system genes.</title>
        <authorList>
            <person name="Kasahara Y."/>
            <person name="Nakai S."/>
            <person name="Ogasawara N."/>
            <person name="Yata K."/>
            <person name="Sadaie Y."/>
        </authorList>
    </citation>
    <scope>NUCLEOTIDE SEQUENCE [GENOMIC DNA]</scope>
    <source>
        <strain>168 / Marburg / ATCC 6051 / DSM 10 / JCM 1465 / NBRC 13719 / NCIMB 3610 / NRRL NRS-744 / VKM B-501</strain>
    </source>
</reference>
<reference key="2">
    <citation type="journal article" date="1997" name="Nature">
        <title>The complete genome sequence of the Gram-positive bacterium Bacillus subtilis.</title>
        <authorList>
            <person name="Kunst F."/>
            <person name="Ogasawara N."/>
            <person name="Moszer I."/>
            <person name="Albertini A.M."/>
            <person name="Alloni G."/>
            <person name="Azevedo V."/>
            <person name="Bertero M.G."/>
            <person name="Bessieres P."/>
            <person name="Bolotin A."/>
            <person name="Borchert S."/>
            <person name="Borriss R."/>
            <person name="Boursier L."/>
            <person name="Brans A."/>
            <person name="Braun M."/>
            <person name="Brignell S.C."/>
            <person name="Bron S."/>
            <person name="Brouillet S."/>
            <person name="Bruschi C.V."/>
            <person name="Caldwell B."/>
            <person name="Capuano V."/>
            <person name="Carter N.M."/>
            <person name="Choi S.-K."/>
            <person name="Codani J.-J."/>
            <person name="Connerton I.F."/>
            <person name="Cummings N.J."/>
            <person name="Daniel R.A."/>
            <person name="Denizot F."/>
            <person name="Devine K.M."/>
            <person name="Duesterhoeft A."/>
            <person name="Ehrlich S.D."/>
            <person name="Emmerson P.T."/>
            <person name="Entian K.-D."/>
            <person name="Errington J."/>
            <person name="Fabret C."/>
            <person name="Ferrari E."/>
            <person name="Foulger D."/>
            <person name="Fritz C."/>
            <person name="Fujita M."/>
            <person name="Fujita Y."/>
            <person name="Fuma S."/>
            <person name="Galizzi A."/>
            <person name="Galleron N."/>
            <person name="Ghim S.-Y."/>
            <person name="Glaser P."/>
            <person name="Goffeau A."/>
            <person name="Golightly E.J."/>
            <person name="Grandi G."/>
            <person name="Guiseppi G."/>
            <person name="Guy B.J."/>
            <person name="Haga K."/>
            <person name="Haiech J."/>
            <person name="Harwood C.R."/>
            <person name="Henaut A."/>
            <person name="Hilbert H."/>
            <person name="Holsappel S."/>
            <person name="Hosono S."/>
            <person name="Hullo M.-F."/>
            <person name="Itaya M."/>
            <person name="Jones L.-M."/>
            <person name="Joris B."/>
            <person name="Karamata D."/>
            <person name="Kasahara Y."/>
            <person name="Klaerr-Blanchard M."/>
            <person name="Klein C."/>
            <person name="Kobayashi Y."/>
            <person name="Koetter P."/>
            <person name="Koningstein G."/>
            <person name="Krogh S."/>
            <person name="Kumano M."/>
            <person name="Kurita K."/>
            <person name="Lapidus A."/>
            <person name="Lardinois S."/>
            <person name="Lauber J."/>
            <person name="Lazarevic V."/>
            <person name="Lee S.-M."/>
            <person name="Levine A."/>
            <person name="Liu H."/>
            <person name="Masuda S."/>
            <person name="Mauel C."/>
            <person name="Medigue C."/>
            <person name="Medina N."/>
            <person name="Mellado R.P."/>
            <person name="Mizuno M."/>
            <person name="Moestl D."/>
            <person name="Nakai S."/>
            <person name="Noback M."/>
            <person name="Noone D."/>
            <person name="O'Reilly M."/>
            <person name="Ogawa K."/>
            <person name="Ogiwara A."/>
            <person name="Oudega B."/>
            <person name="Park S.-H."/>
            <person name="Parro V."/>
            <person name="Pohl T.M."/>
            <person name="Portetelle D."/>
            <person name="Porwollik S."/>
            <person name="Prescott A.M."/>
            <person name="Presecan E."/>
            <person name="Pujic P."/>
            <person name="Purnelle B."/>
            <person name="Rapoport G."/>
            <person name="Rey M."/>
            <person name="Reynolds S."/>
            <person name="Rieger M."/>
            <person name="Rivolta C."/>
            <person name="Rocha E."/>
            <person name="Roche B."/>
            <person name="Rose M."/>
            <person name="Sadaie Y."/>
            <person name="Sato T."/>
            <person name="Scanlan E."/>
            <person name="Schleich S."/>
            <person name="Schroeter R."/>
            <person name="Scoffone F."/>
            <person name="Sekiguchi J."/>
            <person name="Sekowska A."/>
            <person name="Seror S.J."/>
            <person name="Serror P."/>
            <person name="Shin B.-S."/>
            <person name="Soldo B."/>
            <person name="Sorokin A."/>
            <person name="Tacconi E."/>
            <person name="Takagi T."/>
            <person name="Takahashi H."/>
            <person name="Takemaru K."/>
            <person name="Takeuchi M."/>
            <person name="Tamakoshi A."/>
            <person name="Tanaka T."/>
            <person name="Terpstra P."/>
            <person name="Tognoni A."/>
            <person name="Tosato V."/>
            <person name="Uchiyama S."/>
            <person name="Vandenbol M."/>
            <person name="Vannier F."/>
            <person name="Vassarotti A."/>
            <person name="Viari A."/>
            <person name="Wambutt R."/>
            <person name="Wedler E."/>
            <person name="Wedler H."/>
            <person name="Weitzenegger T."/>
            <person name="Winters P."/>
            <person name="Wipat A."/>
            <person name="Yamamoto H."/>
            <person name="Yamane K."/>
            <person name="Yasumoto K."/>
            <person name="Yata K."/>
            <person name="Yoshida K."/>
            <person name="Yoshikawa H.-F."/>
            <person name="Zumstein E."/>
            <person name="Yoshikawa H."/>
            <person name="Danchin A."/>
        </authorList>
    </citation>
    <scope>NUCLEOTIDE SEQUENCE [LARGE SCALE GENOMIC DNA]</scope>
    <source>
        <strain>168</strain>
    </source>
</reference>
<reference key="3">
    <citation type="journal article" date="2002" name="J. Bacteriol.">
        <title>Molecular organization of intrinsic restriction and modification genes BsuM of Bacillus subtilis Marburg.</title>
        <authorList>
            <person name="Ohshima H."/>
            <person name="Matsuoka S."/>
            <person name="Asai K."/>
            <person name="Sadaie Y."/>
        </authorList>
    </citation>
    <scope>INDUCTION</scope>
    <scope>OPERON STRUCTURE</scope>
    <scope>DISRUPTION PHENOTYPE</scope>
    <source>
        <strain>168 / Marburg / ATCC 6051 / DSM 10 / JCM 1465 / NBRC 13719 / NCIMB 3610 / NRRL NRS-744 / VKM B-501</strain>
    </source>
</reference>
<gene>
    <name type="primary">ydiN</name>
    <name type="ordered locus">BSU06050</name>
</gene>
<feature type="signal peptide" evidence="1">
    <location>
        <begin position="1"/>
        <end position="26"/>
    </location>
</feature>
<feature type="chain" id="PRO_0000013697" description="Uncharacterized protein YdiN">
    <location>
        <begin position="27"/>
        <end position="71"/>
    </location>
</feature>
<comment type="induction">
    <text evidence="2">Encoded in an operon with groES, groEL, ydiM, ydiO and ydiP. This operon is heat-inducible.</text>
</comment>
<comment type="disruption phenotype">
    <text evidence="2">No BsuMI restriction or methylation-related phenotype.</text>
</comment>
<keyword id="KW-1185">Reference proteome</keyword>
<keyword id="KW-0732">Signal</keyword>
<sequence>MIKFSVILGMIRCSLTHITTKNTVNALKRMIYPKQKPSFFHEFKVLYKLLKKFCIKGIMIKNIRSCMGYFL</sequence>
<dbReference type="EMBL" id="AB007637">
    <property type="protein sequence ID" value="BAA22749.1"/>
    <property type="molecule type" value="Genomic_DNA"/>
</dbReference>
<dbReference type="EMBL" id="AL009126">
    <property type="status" value="NOT_ANNOTATED_CDS"/>
    <property type="molecule type" value="Genomic_DNA"/>
</dbReference>
<dbReference type="PIR" id="G69787">
    <property type="entry name" value="G69787"/>
</dbReference>
<dbReference type="SMR" id="O34608"/>
<dbReference type="FunCoup" id="O34608">
    <property type="interactions" value="20"/>
</dbReference>
<dbReference type="InParanoid" id="O34608"/>
<dbReference type="Proteomes" id="UP000001570">
    <property type="component" value="Chromosome"/>
</dbReference>
<evidence type="ECO:0000255" key="1"/>
<evidence type="ECO:0000269" key="2">
    <source>
    </source>
</evidence>
<proteinExistence type="evidence at transcript level"/>
<organism>
    <name type="scientific">Bacillus subtilis (strain 168)</name>
    <dbReference type="NCBI Taxonomy" id="224308"/>
    <lineage>
        <taxon>Bacteria</taxon>
        <taxon>Bacillati</taxon>
        <taxon>Bacillota</taxon>
        <taxon>Bacilli</taxon>
        <taxon>Bacillales</taxon>
        <taxon>Bacillaceae</taxon>
        <taxon>Bacillus</taxon>
    </lineage>
</organism>
<accession>O34608</accession>